<reference evidence="8" key="1">
    <citation type="journal article" date="1996" name="DNA Res.">
        <title>Sequence analysis of the genome of the unicellular cyanobacterium Synechocystis sp. strain PCC6803. II. Sequence determination of the entire genome and assignment of potential protein-coding regions.</title>
        <authorList>
            <person name="Kaneko T."/>
            <person name="Sato S."/>
            <person name="Kotani H."/>
            <person name="Tanaka A."/>
            <person name="Asamizu E."/>
            <person name="Nakamura Y."/>
            <person name="Miyajima N."/>
            <person name="Hirosawa M."/>
            <person name="Sugiura M."/>
            <person name="Sasamoto S."/>
            <person name="Kimura T."/>
            <person name="Hosouchi T."/>
            <person name="Matsuno A."/>
            <person name="Muraki A."/>
            <person name="Nakazaki N."/>
            <person name="Naruo K."/>
            <person name="Okumura S."/>
            <person name="Shimpo S."/>
            <person name="Takeuchi C."/>
            <person name="Wada T."/>
            <person name="Watanabe A."/>
            <person name="Yamada M."/>
            <person name="Yasuda M."/>
            <person name="Tabata S."/>
        </authorList>
    </citation>
    <scope>NUCLEOTIDE SEQUENCE [LARGE SCALE GENOMIC DNA]</scope>
    <source>
        <strain>ATCC 27184 / PCC 6803 / Kazusa</strain>
    </source>
</reference>
<reference key="2">
    <citation type="journal article" date="2013" name="Microbiology">
        <title>Biochemical analysis of three putative KaiC clock proteins from Synechocystis sp. PCC 6803 suggests their functional divergence.</title>
        <authorList>
            <person name="Wiegard A."/>
            <person name="Doerrich A.K."/>
            <person name="Deinzer H.T."/>
            <person name="Beck C."/>
            <person name="Wilde A."/>
            <person name="Holtzendorff J."/>
            <person name="Axmann I.M."/>
        </authorList>
    </citation>
    <scope>NOMENCLATURE</scope>
    <source>
        <strain>ATCC 27184 / PCC 6803 / Kazusa</strain>
    </source>
</reference>
<reference key="3">
    <citation type="journal article" date="2020" name="J. Bacteriol.">
        <title>Synechocystis KaiC3 Displays Temperature- and KaiB-Dependent ATPase Activity and Is Important for Growth in Darkness.</title>
        <authorList>
            <person name="Wiegard A."/>
            <person name="Koebler C."/>
            <person name="Oyama K."/>
            <person name="Doerrich A.K."/>
            <person name="Azai C."/>
            <person name="Terauchi K."/>
            <person name="Wilde A."/>
            <person name="Axmann I.M."/>
        </authorList>
    </citation>
    <scope>FUNCTION</scope>
    <scope>INTERACTION WITH KAIC1 AND KAIC3</scope>
    <scope>SUBUNIT</scope>
    <source>
        <strain>ATCC 27184 / PCC 6803 / Kazusa</strain>
    </source>
</reference>
<organism>
    <name type="scientific">Synechocystis sp. (strain ATCC 27184 / PCC 6803 / Kazusa)</name>
    <dbReference type="NCBI Taxonomy" id="1111708"/>
    <lineage>
        <taxon>Bacteria</taxon>
        <taxon>Bacillati</taxon>
        <taxon>Cyanobacteriota</taxon>
        <taxon>Cyanophyceae</taxon>
        <taxon>Synechococcales</taxon>
        <taxon>Merismopediaceae</taxon>
        <taxon>Synechocystis</taxon>
    </lineage>
</organism>
<dbReference type="EMBL" id="BA000022">
    <property type="protein sequence ID" value="BAA10574.1"/>
    <property type="molecule type" value="Genomic_DNA"/>
</dbReference>
<dbReference type="PIR" id="S76630">
    <property type="entry name" value="S76630"/>
</dbReference>
<dbReference type="SMR" id="Q55819"/>
<dbReference type="STRING" id="1148.gene:10500078"/>
<dbReference type="PaxDb" id="1148-1001737"/>
<dbReference type="EnsemblBacteria" id="BAA10574">
    <property type="protein sequence ID" value="BAA10574"/>
    <property type="gene ID" value="BAA10574"/>
</dbReference>
<dbReference type="KEGG" id="syn:sll0486"/>
<dbReference type="eggNOG" id="COG4251">
    <property type="taxonomic scope" value="Bacteria"/>
</dbReference>
<dbReference type="InParanoid" id="Q55819"/>
<dbReference type="PhylomeDB" id="Q55819"/>
<dbReference type="Proteomes" id="UP000001425">
    <property type="component" value="Chromosome"/>
</dbReference>
<dbReference type="GO" id="GO:0048511">
    <property type="term" value="P:rhythmic process"/>
    <property type="evidence" value="ECO:0007669"/>
    <property type="project" value="UniProtKB-KW"/>
</dbReference>
<dbReference type="CDD" id="cd02978">
    <property type="entry name" value="KaiB_like"/>
    <property type="match status" value="1"/>
</dbReference>
<dbReference type="Gene3D" id="3.40.30.10">
    <property type="entry name" value="Glutaredoxin"/>
    <property type="match status" value="1"/>
</dbReference>
<dbReference type="InterPro" id="IPR039022">
    <property type="entry name" value="KaiB-like"/>
</dbReference>
<dbReference type="InterPro" id="IPR011649">
    <property type="entry name" value="KaiB_domain"/>
</dbReference>
<dbReference type="InterPro" id="IPR036249">
    <property type="entry name" value="Thioredoxin-like_sf"/>
</dbReference>
<dbReference type="PANTHER" id="PTHR41709:SF2">
    <property type="entry name" value="CIRCADIAN CLOCK PROTEIN KAIB2"/>
    <property type="match status" value="1"/>
</dbReference>
<dbReference type="PANTHER" id="PTHR41709">
    <property type="entry name" value="KAIB-LIKE PROTEIN 1"/>
    <property type="match status" value="1"/>
</dbReference>
<dbReference type="Pfam" id="PF07689">
    <property type="entry name" value="KaiB"/>
    <property type="match status" value="1"/>
</dbReference>
<dbReference type="SMART" id="SM01248">
    <property type="entry name" value="KaiB"/>
    <property type="match status" value="1"/>
</dbReference>
<dbReference type="SUPFAM" id="SSF52833">
    <property type="entry name" value="Thioredoxin-like"/>
    <property type="match status" value="1"/>
</dbReference>
<accession>Q55819</accession>
<keyword id="KW-0090">Biological rhythms</keyword>
<keyword id="KW-1185">Reference proteome</keyword>
<comment type="function">
    <text evidence="3 7">A paralog of KaiB1, the major clock oscillator protein in this species. KaiB3 and KaiC3 may cross talk with the core oscillator (Probable) (PubMed:31767776). The monomer reduces the ATPase activity of KaiC3 by 55%, the homotetramer has no effect (PubMed:31767776).</text>
</comment>
<comment type="function">
    <text evidence="1 2">A metamorphic protein which may reversibly switch between an inactive tetrameric fold and a rare thioredoxin-like monomeric fold (KaiB(fs)).</text>
</comment>
<comment type="subunit">
    <text evidence="3">Purifies as a monomer and homotetramer. Interacts with KaiC1 and KaiC3.</text>
</comment>
<comment type="similarity">
    <text evidence="6">Belongs to the KaiB family.</text>
</comment>
<protein>
    <recommendedName>
        <fullName evidence="4">Circadian clock protein KaiB3</fullName>
    </recommendedName>
</protein>
<evidence type="ECO:0000250" key="1">
    <source>
        <dbReference type="UniProtKB" id="Q79PF5"/>
    </source>
</evidence>
<evidence type="ECO:0000250" key="2">
    <source>
        <dbReference type="UniProtKB" id="Q79V61"/>
    </source>
</evidence>
<evidence type="ECO:0000269" key="3">
    <source>
    </source>
</evidence>
<evidence type="ECO:0000303" key="4">
    <source>
    </source>
</evidence>
<evidence type="ECO:0000303" key="5">
    <source>
    </source>
</evidence>
<evidence type="ECO:0000305" key="6"/>
<evidence type="ECO:0000305" key="7">
    <source>
    </source>
</evidence>
<evidence type="ECO:0000312" key="8">
    <source>
        <dbReference type="EMBL" id="BAA10574.1"/>
    </source>
</evidence>
<name>KAIB3_SYNY3</name>
<feature type="chain" id="PRO_0000217773" description="Circadian clock protein KaiB3">
    <location>
        <begin position="1"/>
        <end position="102"/>
    </location>
</feature>
<gene>
    <name evidence="4 5" type="primary">kaiB3</name>
    <name type="ordered locus">sll0486</name>
</gene>
<sequence>MDMNRIVLRLYITGNSVRSQQAIANIYRICQEDLGDQYNVEIIDVLEQPQRAEEEKIMVTPTLIKQLPPPLQRIIGDMSNTEKVLLGLDIVPEGLQVRLPED</sequence>
<proteinExistence type="evidence at protein level"/>